<feature type="chain" id="PRO_0000165596" description="Holliday junction branch migration complex subunit RuvB">
    <location>
        <begin position="1"/>
        <end position="334"/>
    </location>
</feature>
<feature type="region of interest" description="Large ATPase domain (RuvB-L)" evidence="1">
    <location>
        <begin position="1"/>
        <end position="182"/>
    </location>
</feature>
<feature type="region of interest" description="Small ATPAse domain (RuvB-S)" evidence="1">
    <location>
        <begin position="183"/>
        <end position="253"/>
    </location>
</feature>
<feature type="region of interest" description="Head domain (RuvB-H)" evidence="1">
    <location>
        <begin position="256"/>
        <end position="334"/>
    </location>
</feature>
<feature type="binding site" evidence="1">
    <location>
        <position position="21"/>
    </location>
    <ligand>
        <name>ATP</name>
        <dbReference type="ChEBI" id="CHEBI:30616"/>
    </ligand>
</feature>
<feature type="binding site" evidence="1">
    <location>
        <position position="22"/>
    </location>
    <ligand>
        <name>ATP</name>
        <dbReference type="ChEBI" id="CHEBI:30616"/>
    </ligand>
</feature>
<feature type="binding site" evidence="1">
    <location>
        <position position="63"/>
    </location>
    <ligand>
        <name>ATP</name>
        <dbReference type="ChEBI" id="CHEBI:30616"/>
    </ligand>
</feature>
<feature type="binding site" evidence="1">
    <location>
        <position position="66"/>
    </location>
    <ligand>
        <name>ATP</name>
        <dbReference type="ChEBI" id="CHEBI:30616"/>
    </ligand>
</feature>
<feature type="binding site" evidence="1">
    <location>
        <position position="67"/>
    </location>
    <ligand>
        <name>ATP</name>
        <dbReference type="ChEBI" id="CHEBI:30616"/>
    </ligand>
</feature>
<feature type="binding site" evidence="1">
    <location>
        <position position="67"/>
    </location>
    <ligand>
        <name>Mg(2+)</name>
        <dbReference type="ChEBI" id="CHEBI:18420"/>
    </ligand>
</feature>
<feature type="binding site" evidence="1">
    <location>
        <position position="68"/>
    </location>
    <ligand>
        <name>ATP</name>
        <dbReference type="ChEBI" id="CHEBI:30616"/>
    </ligand>
</feature>
<feature type="binding site" evidence="1">
    <location>
        <begin position="129"/>
        <end position="131"/>
    </location>
    <ligand>
        <name>ATP</name>
        <dbReference type="ChEBI" id="CHEBI:30616"/>
    </ligand>
</feature>
<feature type="binding site" evidence="1">
    <location>
        <position position="172"/>
    </location>
    <ligand>
        <name>ATP</name>
        <dbReference type="ChEBI" id="CHEBI:30616"/>
    </ligand>
</feature>
<feature type="binding site" evidence="1">
    <location>
        <position position="182"/>
    </location>
    <ligand>
        <name>ATP</name>
        <dbReference type="ChEBI" id="CHEBI:30616"/>
    </ligand>
</feature>
<feature type="binding site" evidence="1">
    <location>
        <position position="219"/>
    </location>
    <ligand>
        <name>ATP</name>
        <dbReference type="ChEBI" id="CHEBI:30616"/>
    </ligand>
</feature>
<feature type="binding site" evidence="1">
    <location>
        <position position="292"/>
    </location>
    <ligand>
        <name>DNA</name>
        <dbReference type="ChEBI" id="CHEBI:16991"/>
    </ligand>
</feature>
<feature type="binding site" evidence="1">
    <location>
        <position position="311"/>
    </location>
    <ligand>
        <name>DNA</name>
        <dbReference type="ChEBI" id="CHEBI:16991"/>
    </ligand>
</feature>
<feature type="binding site" evidence="1">
    <location>
        <position position="316"/>
    </location>
    <ligand>
        <name>DNA</name>
        <dbReference type="ChEBI" id="CHEBI:16991"/>
    </ligand>
</feature>
<reference key="1">
    <citation type="journal article" date="2001" name="Lancet">
        <title>Whole genome sequencing of meticillin-resistant Staphylococcus aureus.</title>
        <authorList>
            <person name="Kuroda M."/>
            <person name="Ohta T."/>
            <person name="Uchiyama I."/>
            <person name="Baba T."/>
            <person name="Yuzawa H."/>
            <person name="Kobayashi I."/>
            <person name="Cui L."/>
            <person name="Oguchi A."/>
            <person name="Aoki K."/>
            <person name="Nagai Y."/>
            <person name="Lian J.-Q."/>
            <person name="Ito T."/>
            <person name="Kanamori M."/>
            <person name="Matsumaru H."/>
            <person name="Maruyama A."/>
            <person name="Murakami H."/>
            <person name="Hosoyama A."/>
            <person name="Mizutani-Ui Y."/>
            <person name="Takahashi N.K."/>
            <person name="Sawano T."/>
            <person name="Inoue R."/>
            <person name="Kaito C."/>
            <person name="Sekimizu K."/>
            <person name="Hirakawa H."/>
            <person name="Kuhara S."/>
            <person name="Goto S."/>
            <person name="Yabuzaki J."/>
            <person name="Kanehisa M."/>
            <person name="Yamashita A."/>
            <person name="Oshima K."/>
            <person name="Furuya K."/>
            <person name="Yoshino C."/>
            <person name="Shiba T."/>
            <person name="Hattori M."/>
            <person name="Ogasawara N."/>
            <person name="Hayashi H."/>
            <person name="Hiramatsu K."/>
        </authorList>
    </citation>
    <scope>NUCLEOTIDE SEQUENCE [LARGE SCALE GENOMIC DNA]</scope>
    <source>
        <strain>N315</strain>
    </source>
</reference>
<reference key="2">
    <citation type="submission" date="2007-10" db="UniProtKB">
        <title>Shotgun proteomic analysis of total and membrane protein extracts of S. aureus strain N315.</title>
        <authorList>
            <person name="Vaezzadeh A.R."/>
            <person name="Deshusses J."/>
            <person name="Lescuyer P."/>
            <person name="Hochstrasser D.F."/>
        </authorList>
    </citation>
    <scope>IDENTIFICATION BY MASS SPECTROMETRY [LARGE SCALE ANALYSIS]</scope>
    <source>
        <strain>N315</strain>
    </source>
</reference>
<organism>
    <name type="scientific">Staphylococcus aureus (strain N315)</name>
    <dbReference type="NCBI Taxonomy" id="158879"/>
    <lineage>
        <taxon>Bacteria</taxon>
        <taxon>Bacillati</taxon>
        <taxon>Bacillota</taxon>
        <taxon>Bacilli</taxon>
        <taxon>Bacillales</taxon>
        <taxon>Staphylococcaceae</taxon>
        <taxon>Staphylococcus</taxon>
    </lineage>
</organism>
<protein>
    <recommendedName>
        <fullName evidence="1">Holliday junction branch migration complex subunit RuvB</fullName>
        <ecNumber evidence="1">3.6.4.-</ecNumber>
    </recommendedName>
</protein>
<gene>
    <name evidence="1" type="primary">ruvB</name>
    <name type="ordered locus">SA1467</name>
</gene>
<name>RUVB_STAAN</name>
<sequence>MNERMVDQSMHSEETDFELSLRPTRLRQYIGQNSIKSNLEVFIKAAKLRHEPLDHVLLFGPPGLGKTTLSNIIANEMEVNIRTVSGPSLERPGDLAAILSGLQPGDVLFIDEIHRLSSVVEEVLYPAMEDFFLDIIIGKGDEARSIRIDLPPFTLVGATTRAGSLTGPLRDRFGVHLRLEYYNESDLKEIIIRTAEVLGTGIDEESAIELAKRSRGTPRVANRLLKRVRDFQQVNEDEQIYIETTKHALGLLQVDQHGLDYIDHKMMNCIIKQYNGGPVGLDTIAVTIGEERITIEDVYEPFLIQKGFLERTPRGRKATPLAYEHFAKSNEERG</sequence>
<evidence type="ECO:0000255" key="1">
    <source>
        <dbReference type="HAMAP-Rule" id="MF_00016"/>
    </source>
</evidence>
<accession>P66758</accession>
<accession>Q99TL2</accession>
<keyword id="KW-0067">ATP-binding</keyword>
<keyword id="KW-0963">Cytoplasm</keyword>
<keyword id="KW-0227">DNA damage</keyword>
<keyword id="KW-0233">DNA recombination</keyword>
<keyword id="KW-0234">DNA repair</keyword>
<keyword id="KW-0238">DNA-binding</keyword>
<keyword id="KW-0378">Hydrolase</keyword>
<keyword id="KW-0547">Nucleotide-binding</keyword>
<dbReference type="EC" id="3.6.4.-" evidence="1"/>
<dbReference type="EMBL" id="BA000018">
    <property type="protein sequence ID" value="BAB42733.1"/>
    <property type="molecule type" value="Genomic_DNA"/>
</dbReference>
<dbReference type="PIR" id="H89946">
    <property type="entry name" value="H89946"/>
</dbReference>
<dbReference type="RefSeq" id="WP_001005768.1">
    <property type="nucleotide sequence ID" value="NC_002745.2"/>
</dbReference>
<dbReference type="SMR" id="P66758"/>
<dbReference type="EnsemblBacteria" id="BAB42733">
    <property type="protein sequence ID" value="BAB42733"/>
    <property type="gene ID" value="BAB42733"/>
</dbReference>
<dbReference type="KEGG" id="sau:SA1467"/>
<dbReference type="HOGENOM" id="CLU_055599_1_0_9"/>
<dbReference type="GO" id="GO:0005737">
    <property type="term" value="C:cytoplasm"/>
    <property type="evidence" value="ECO:0007669"/>
    <property type="project" value="UniProtKB-SubCell"/>
</dbReference>
<dbReference type="GO" id="GO:0048476">
    <property type="term" value="C:Holliday junction resolvase complex"/>
    <property type="evidence" value="ECO:0007669"/>
    <property type="project" value="UniProtKB-UniRule"/>
</dbReference>
<dbReference type="GO" id="GO:0005524">
    <property type="term" value="F:ATP binding"/>
    <property type="evidence" value="ECO:0007669"/>
    <property type="project" value="UniProtKB-UniRule"/>
</dbReference>
<dbReference type="GO" id="GO:0016887">
    <property type="term" value="F:ATP hydrolysis activity"/>
    <property type="evidence" value="ECO:0007669"/>
    <property type="project" value="InterPro"/>
</dbReference>
<dbReference type="GO" id="GO:0000400">
    <property type="term" value="F:four-way junction DNA binding"/>
    <property type="evidence" value="ECO:0007669"/>
    <property type="project" value="UniProtKB-UniRule"/>
</dbReference>
<dbReference type="GO" id="GO:0009378">
    <property type="term" value="F:four-way junction helicase activity"/>
    <property type="evidence" value="ECO:0007669"/>
    <property type="project" value="InterPro"/>
</dbReference>
<dbReference type="GO" id="GO:0006310">
    <property type="term" value="P:DNA recombination"/>
    <property type="evidence" value="ECO:0007669"/>
    <property type="project" value="UniProtKB-UniRule"/>
</dbReference>
<dbReference type="GO" id="GO:0006281">
    <property type="term" value="P:DNA repair"/>
    <property type="evidence" value="ECO:0007669"/>
    <property type="project" value="UniProtKB-UniRule"/>
</dbReference>
<dbReference type="CDD" id="cd00009">
    <property type="entry name" value="AAA"/>
    <property type="match status" value="1"/>
</dbReference>
<dbReference type="Gene3D" id="1.10.8.60">
    <property type="match status" value="1"/>
</dbReference>
<dbReference type="Gene3D" id="3.40.50.300">
    <property type="entry name" value="P-loop containing nucleotide triphosphate hydrolases"/>
    <property type="match status" value="1"/>
</dbReference>
<dbReference type="Gene3D" id="1.10.10.10">
    <property type="entry name" value="Winged helix-like DNA-binding domain superfamily/Winged helix DNA-binding domain"/>
    <property type="match status" value="1"/>
</dbReference>
<dbReference type="HAMAP" id="MF_00016">
    <property type="entry name" value="DNA_HJ_migration_RuvB"/>
    <property type="match status" value="1"/>
</dbReference>
<dbReference type="InterPro" id="IPR003593">
    <property type="entry name" value="AAA+_ATPase"/>
</dbReference>
<dbReference type="InterPro" id="IPR041445">
    <property type="entry name" value="AAA_lid_4"/>
</dbReference>
<dbReference type="InterPro" id="IPR004605">
    <property type="entry name" value="DNA_helicase_Holl-junc_RuvB"/>
</dbReference>
<dbReference type="InterPro" id="IPR027417">
    <property type="entry name" value="P-loop_NTPase"/>
</dbReference>
<dbReference type="InterPro" id="IPR008824">
    <property type="entry name" value="RuvB-like_N"/>
</dbReference>
<dbReference type="InterPro" id="IPR008823">
    <property type="entry name" value="RuvB_C"/>
</dbReference>
<dbReference type="InterPro" id="IPR036388">
    <property type="entry name" value="WH-like_DNA-bd_sf"/>
</dbReference>
<dbReference type="InterPro" id="IPR036390">
    <property type="entry name" value="WH_DNA-bd_sf"/>
</dbReference>
<dbReference type="NCBIfam" id="NF000868">
    <property type="entry name" value="PRK00080.1"/>
    <property type="match status" value="1"/>
</dbReference>
<dbReference type="NCBIfam" id="TIGR00635">
    <property type="entry name" value="ruvB"/>
    <property type="match status" value="1"/>
</dbReference>
<dbReference type="PANTHER" id="PTHR42848">
    <property type="match status" value="1"/>
</dbReference>
<dbReference type="PANTHER" id="PTHR42848:SF1">
    <property type="entry name" value="HOLLIDAY JUNCTION BRANCH MIGRATION COMPLEX SUBUNIT RUVB"/>
    <property type="match status" value="1"/>
</dbReference>
<dbReference type="Pfam" id="PF17864">
    <property type="entry name" value="AAA_lid_4"/>
    <property type="match status" value="1"/>
</dbReference>
<dbReference type="Pfam" id="PF05491">
    <property type="entry name" value="RuvB_C"/>
    <property type="match status" value="1"/>
</dbReference>
<dbReference type="Pfam" id="PF05496">
    <property type="entry name" value="RuvB_N"/>
    <property type="match status" value="1"/>
</dbReference>
<dbReference type="SMART" id="SM00382">
    <property type="entry name" value="AAA"/>
    <property type="match status" value="1"/>
</dbReference>
<dbReference type="SUPFAM" id="SSF52540">
    <property type="entry name" value="P-loop containing nucleoside triphosphate hydrolases"/>
    <property type="match status" value="1"/>
</dbReference>
<dbReference type="SUPFAM" id="SSF46785">
    <property type="entry name" value="Winged helix' DNA-binding domain"/>
    <property type="match status" value="1"/>
</dbReference>
<comment type="function">
    <text evidence="1">The RuvA-RuvB-RuvC complex processes Holliday junction (HJ) DNA during genetic recombination and DNA repair, while the RuvA-RuvB complex plays an important role in the rescue of blocked DNA replication forks via replication fork reversal (RFR). RuvA specifically binds to HJ cruciform DNA, conferring on it an open structure. The RuvB hexamer acts as an ATP-dependent pump, pulling dsDNA into and through the RuvAB complex. RuvB forms 2 homohexamers on either side of HJ DNA bound by 1 or 2 RuvA tetramers; 4 subunits per hexamer contact DNA at a time. Coordinated motions by a converter formed by DNA-disengaged RuvB subunits stimulates ATP hydrolysis and nucleotide exchange. Immobilization of the converter enables RuvB to convert the ATP-contained energy into a lever motion, pulling 2 nucleotides of DNA out of the RuvA tetramer per ATP hydrolyzed, thus driving DNA branch migration. The RuvB motors rotate together with the DNA substrate, which together with the progressing nucleotide cycle form the mechanistic basis for DNA recombination by continuous HJ branch migration. Branch migration allows RuvC to scan DNA until it finds its consensus sequence, where it cleaves and resolves cruciform DNA.</text>
</comment>
<comment type="catalytic activity">
    <reaction evidence="1">
        <text>ATP + H2O = ADP + phosphate + H(+)</text>
        <dbReference type="Rhea" id="RHEA:13065"/>
        <dbReference type="ChEBI" id="CHEBI:15377"/>
        <dbReference type="ChEBI" id="CHEBI:15378"/>
        <dbReference type="ChEBI" id="CHEBI:30616"/>
        <dbReference type="ChEBI" id="CHEBI:43474"/>
        <dbReference type="ChEBI" id="CHEBI:456216"/>
    </reaction>
</comment>
<comment type="subunit">
    <text evidence="1">Homohexamer. Forms an RuvA(8)-RuvB(12)-Holliday junction (HJ) complex. HJ DNA is sandwiched between 2 RuvA tetramers; dsDNA enters through RuvA and exits via RuvB. An RuvB hexamer assembles on each DNA strand where it exits the tetramer. Each RuvB hexamer is contacted by two RuvA subunits (via domain III) on 2 adjacent RuvB subunits; this complex drives branch migration. In the full resolvosome a probable DNA-RuvA(4)-RuvB(12)-RuvC(2) complex forms which resolves the HJ.</text>
</comment>
<comment type="subcellular location">
    <subcellularLocation>
        <location evidence="1">Cytoplasm</location>
    </subcellularLocation>
</comment>
<comment type="domain">
    <text evidence="1">Has 3 domains, the large (RuvB-L) and small ATPase (RuvB-S) domains and the C-terminal head (RuvB-H) domain. The head domain binds DNA, while the ATPase domains jointly bind ATP, ADP or are empty depending on the state of the subunit in the translocation cycle. During a single DNA translocation step the structure of each domain remains the same, but their relative positions change.</text>
</comment>
<comment type="similarity">
    <text evidence="1">Belongs to the RuvB family.</text>
</comment>
<proteinExistence type="evidence at protein level"/>